<name>CHS7_SORBI</name>
<gene>
    <name type="primary">CHS7</name>
</gene>
<accession>Q9XGX1</accession>
<keyword id="KW-0012">Acyltransferase</keyword>
<keyword id="KW-0284">Flavonoid biosynthesis</keyword>
<keyword id="KW-0808">Transferase</keyword>
<sequence>MAGATVTVEEVRKAQRATGPATVLAIGTATPANCVHQADYPDYYFRITKSEHMTDLKEKFKRMCDKSQIRKRYMHLTEEYLAENPNMCAYMAPSLDARQDIVVVEVPKLGKAAAQKAIKEWGQPKSKITHLVFCTTSGVDMPGADYQLTKMLGLRPSVNRLMMYQQGCFAGGTVLRVAKDLAENNRGARVLVVCSEITAVTFRGPSESHLDSMVGQALFGDGAAAVIVGADPDKRVECPLFQLVSASQTILPDSEGAIDGHLREVGLTFHLLKDVPGLISKNIERSLEEAFKPLGITDYNSIFWVAHPGGPAILDQVEAKVGLKKERMRATRHVLSEYGNMSSACVLFILDEMRKRSAEEGQATTGEGFDWGVLFGFGPGLTVETVVLHSVPITIAAITA</sequence>
<feature type="chain" id="PRO_0000216061" description="Chalcone synthase 7">
    <location>
        <begin position="1"/>
        <end position="400"/>
    </location>
</feature>
<feature type="active site" evidence="1">
    <location>
        <position position="168"/>
    </location>
</feature>
<evidence type="ECO:0000255" key="1">
    <source>
        <dbReference type="PROSITE-ProRule" id="PRU10023"/>
    </source>
</evidence>
<evidence type="ECO:0000305" key="2"/>
<protein>
    <recommendedName>
        <fullName>Chalcone synthase 7</fullName>
        <ecNumber>2.3.1.74</ecNumber>
    </recommendedName>
    <alternativeName>
        <fullName>Naringenin-chalcone synthase 7</fullName>
    </alternativeName>
</protein>
<proteinExistence type="inferred from homology"/>
<comment type="function">
    <text>The primary product of this enzyme is 4,2',4',6'-tetrahydroxychalcone (also termed naringenin-chalcone or chalcone) which can under specific conditions spontaneously isomerize into naringenin.</text>
</comment>
<comment type="catalytic activity">
    <reaction evidence="1">
        <text>(E)-4-coumaroyl-CoA + 3 malonyl-CoA + 3 H(+) = 2',4,4',6'-tetrahydroxychalcone + 3 CO2 + 4 CoA</text>
        <dbReference type="Rhea" id="RHEA:11128"/>
        <dbReference type="ChEBI" id="CHEBI:15378"/>
        <dbReference type="ChEBI" id="CHEBI:15413"/>
        <dbReference type="ChEBI" id="CHEBI:16526"/>
        <dbReference type="ChEBI" id="CHEBI:57287"/>
        <dbReference type="ChEBI" id="CHEBI:57384"/>
        <dbReference type="ChEBI" id="CHEBI:85008"/>
        <dbReference type="EC" id="2.3.1.74"/>
    </reaction>
</comment>
<comment type="pathway">
    <text>Secondary metabolite biosynthesis; flavonoid biosynthesis.</text>
</comment>
<comment type="similarity">
    <text evidence="2">Belongs to the thiolase-like superfamily. Chalcone/stilbene synthases family.</text>
</comment>
<reference key="1">
    <citation type="submission" date="1999-05" db="EMBL/GenBank/DDBJ databases">
        <title>Molecular cloning of chalcone synthase genes from sorghum.</title>
        <authorList>
            <person name="Lo S.-C.C."/>
            <person name="Nicholson R.L."/>
        </authorList>
    </citation>
    <scope>NUCLEOTIDE SEQUENCE [GENOMIC DNA]</scope>
    <source>
        <strain>cv. BTx623</strain>
    </source>
</reference>
<dbReference type="EC" id="2.3.1.74"/>
<dbReference type="EMBL" id="AF152554">
    <property type="protein sequence ID" value="AAD41879.1"/>
    <property type="molecule type" value="Genomic_DNA"/>
</dbReference>
<dbReference type="SMR" id="Q9XGX1"/>
<dbReference type="EnsemblPlants" id="EES09864">
    <property type="protein sequence ID" value="EES09864"/>
    <property type="gene ID" value="SORBI_3005G137200"/>
</dbReference>
<dbReference type="GeneID" id="8064819"/>
<dbReference type="Gramene" id="EES09864">
    <property type="protein sequence ID" value="EES09864"/>
    <property type="gene ID" value="SORBI_3005G137200"/>
</dbReference>
<dbReference type="KEGG" id="sbi:8064819"/>
<dbReference type="eggNOG" id="ENOG502QRSY">
    <property type="taxonomic scope" value="Eukaryota"/>
</dbReference>
<dbReference type="HOGENOM" id="CLU_034992_2_0_1"/>
<dbReference type="OMA" id="RITHVIF"/>
<dbReference type="OrthoDB" id="1529441at2759"/>
<dbReference type="UniPathway" id="UPA00154"/>
<dbReference type="ExpressionAtlas" id="Q9XGX1">
    <property type="expression patterns" value="baseline and differential"/>
</dbReference>
<dbReference type="GO" id="GO:0016210">
    <property type="term" value="F:naringenin-chalcone synthase activity"/>
    <property type="evidence" value="ECO:0007669"/>
    <property type="project" value="UniProtKB-EC"/>
</dbReference>
<dbReference type="GO" id="GO:0009813">
    <property type="term" value="P:flavonoid biosynthetic process"/>
    <property type="evidence" value="ECO:0007669"/>
    <property type="project" value="UniProtKB-UniPathway"/>
</dbReference>
<dbReference type="CDD" id="cd00831">
    <property type="entry name" value="CHS_like"/>
    <property type="match status" value="1"/>
</dbReference>
<dbReference type="FunFam" id="3.40.47.10:FF:000014">
    <property type="entry name" value="Chalcone synthase 1"/>
    <property type="match status" value="1"/>
</dbReference>
<dbReference type="FunFam" id="3.40.47.10:FF:000025">
    <property type="entry name" value="Chalcone synthase 2"/>
    <property type="match status" value="1"/>
</dbReference>
<dbReference type="Gene3D" id="3.40.47.10">
    <property type="match status" value="2"/>
</dbReference>
<dbReference type="InterPro" id="IPR012328">
    <property type="entry name" value="Chalcone/stilbene_synt_C"/>
</dbReference>
<dbReference type="InterPro" id="IPR001099">
    <property type="entry name" value="Chalcone/stilbene_synt_N"/>
</dbReference>
<dbReference type="InterPro" id="IPR018088">
    <property type="entry name" value="Chalcone/stilbene_synthase_AS"/>
</dbReference>
<dbReference type="InterPro" id="IPR011141">
    <property type="entry name" value="Polyketide_synthase_type-III"/>
</dbReference>
<dbReference type="InterPro" id="IPR016039">
    <property type="entry name" value="Thiolase-like"/>
</dbReference>
<dbReference type="PANTHER" id="PTHR11877:SF14">
    <property type="entry name" value="CHALCONE SYNTHASE"/>
    <property type="match status" value="1"/>
</dbReference>
<dbReference type="PANTHER" id="PTHR11877">
    <property type="entry name" value="HYDROXYMETHYLGLUTARYL-COA SYNTHASE"/>
    <property type="match status" value="1"/>
</dbReference>
<dbReference type="Pfam" id="PF02797">
    <property type="entry name" value="Chal_sti_synt_C"/>
    <property type="match status" value="1"/>
</dbReference>
<dbReference type="Pfam" id="PF00195">
    <property type="entry name" value="Chal_sti_synt_N"/>
    <property type="match status" value="1"/>
</dbReference>
<dbReference type="PIRSF" id="PIRSF000451">
    <property type="entry name" value="PKS_III"/>
    <property type="match status" value="1"/>
</dbReference>
<dbReference type="SUPFAM" id="SSF53901">
    <property type="entry name" value="Thiolase-like"/>
    <property type="match status" value="2"/>
</dbReference>
<dbReference type="PROSITE" id="PS00441">
    <property type="entry name" value="CHALCONE_SYNTH"/>
    <property type="match status" value="1"/>
</dbReference>
<organism>
    <name type="scientific">Sorghum bicolor</name>
    <name type="common">Sorghum</name>
    <name type="synonym">Sorghum vulgare</name>
    <dbReference type="NCBI Taxonomy" id="4558"/>
    <lineage>
        <taxon>Eukaryota</taxon>
        <taxon>Viridiplantae</taxon>
        <taxon>Streptophyta</taxon>
        <taxon>Embryophyta</taxon>
        <taxon>Tracheophyta</taxon>
        <taxon>Spermatophyta</taxon>
        <taxon>Magnoliopsida</taxon>
        <taxon>Liliopsida</taxon>
        <taxon>Poales</taxon>
        <taxon>Poaceae</taxon>
        <taxon>PACMAD clade</taxon>
        <taxon>Panicoideae</taxon>
        <taxon>Andropogonodae</taxon>
        <taxon>Andropogoneae</taxon>
        <taxon>Sorghinae</taxon>
        <taxon>Sorghum</taxon>
    </lineage>
</organism>